<accession>C0MD67</accession>
<sequence>MKPSIYGLTRDELIAWAIDNGQKAFRATQIWDWLYRKRVQSFDEMTNISKEFLAILKDSFCINPLKQRVAQESADGTVKYLFELPDGMLIETVLMRQHYGQSVCVTTQVGCNIGCTFCASGLIKKQRDLNSGEITAQIMMVQNYFDQRGQDERVSHVVVMGIGEPFDNYQNVMTFLRTINDDHGLAIGARHITVSTSGLAHKIREFANEGVQVNLAVSLHAPNNELRSSIMRINRSFPLDKLFSAIEYYIETTNRRVTFEYIMLNKVNDGVEQAQELADLTKRIRKLSYVNLIPYNPVSEHDQYSRSPKERVAAFYDILKKNGVNCVVRQEHGTDIDAACGQLRSNTMKKDRQKAATART</sequence>
<feature type="chain" id="PRO_1000216127" description="Probable dual-specificity RNA methyltransferase RlmN">
    <location>
        <begin position="1"/>
        <end position="360"/>
    </location>
</feature>
<feature type="domain" description="Radical SAM core" evidence="2">
    <location>
        <begin position="97"/>
        <end position="335"/>
    </location>
</feature>
<feature type="active site" description="Proton acceptor" evidence="1">
    <location>
        <position position="91"/>
    </location>
</feature>
<feature type="active site" description="S-methylcysteine intermediate" evidence="1">
    <location>
        <position position="340"/>
    </location>
</feature>
<feature type="binding site" evidence="1">
    <location>
        <position position="111"/>
    </location>
    <ligand>
        <name>[4Fe-4S] cluster</name>
        <dbReference type="ChEBI" id="CHEBI:49883"/>
        <note>4Fe-4S-S-AdoMet</note>
    </ligand>
</feature>
<feature type="binding site" evidence="1">
    <location>
        <position position="115"/>
    </location>
    <ligand>
        <name>[4Fe-4S] cluster</name>
        <dbReference type="ChEBI" id="CHEBI:49883"/>
        <note>4Fe-4S-S-AdoMet</note>
    </ligand>
</feature>
<feature type="binding site" evidence="1">
    <location>
        <position position="118"/>
    </location>
    <ligand>
        <name>[4Fe-4S] cluster</name>
        <dbReference type="ChEBI" id="CHEBI:49883"/>
        <note>4Fe-4S-S-AdoMet</note>
    </ligand>
</feature>
<feature type="binding site" evidence="1">
    <location>
        <begin position="163"/>
        <end position="164"/>
    </location>
    <ligand>
        <name>S-adenosyl-L-methionine</name>
        <dbReference type="ChEBI" id="CHEBI:59789"/>
    </ligand>
</feature>
<feature type="binding site" evidence="1">
    <location>
        <position position="195"/>
    </location>
    <ligand>
        <name>S-adenosyl-L-methionine</name>
        <dbReference type="ChEBI" id="CHEBI:59789"/>
    </ligand>
</feature>
<feature type="binding site" evidence="1">
    <location>
        <begin position="218"/>
        <end position="220"/>
    </location>
    <ligand>
        <name>S-adenosyl-L-methionine</name>
        <dbReference type="ChEBI" id="CHEBI:59789"/>
    </ligand>
</feature>
<feature type="binding site" evidence="1">
    <location>
        <position position="296"/>
    </location>
    <ligand>
        <name>S-adenosyl-L-methionine</name>
        <dbReference type="ChEBI" id="CHEBI:59789"/>
    </ligand>
</feature>
<feature type="disulfide bond" description="(transient)" evidence="1">
    <location>
        <begin position="104"/>
        <end position="340"/>
    </location>
</feature>
<comment type="function">
    <text evidence="1">Specifically methylates position 2 of adenine 2503 in 23S rRNA and position 2 of adenine 37 in tRNAs.</text>
</comment>
<comment type="catalytic activity">
    <reaction evidence="1">
        <text>adenosine(2503) in 23S rRNA + 2 reduced [2Fe-2S]-[ferredoxin] + 2 S-adenosyl-L-methionine = 2-methyladenosine(2503) in 23S rRNA + 5'-deoxyadenosine + L-methionine + 2 oxidized [2Fe-2S]-[ferredoxin] + S-adenosyl-L-homocysteine</text>
        <dbReference type="Rhea" id="RHEA:42916"/>
        <dbReference type="Rhea" id="RHEA-COMP:10000"/>
        <dbReference type="Rhea" id="RHEA-COMP:10001"/>
        <dbReference type="Rhea" id="RHEA-COMP:10152"/>
        <dbReference type="Rhea" id="RHEA-COMP:10282"/>
        <dbReference type="ChEBI" id="CHEBI:17319"/>
        <dbReference type="ChEBI" id="CHEBI:33737"/>
        <dbReference type="ChEBI" id="CHEBI:33738"/>
        <dbReference type="ChEBI" id="CHEBI:57844"/>
        <dbReference type="ChEBI" id="CHEBI:57856"/>
        <dbReference type="ChEBI" id="CHEBI:59789"/>
        <dbReference type="ChEBI" id="CHEBI:74411"/>
        <dbReference type="ChEBI" id="CHEBI:74497"/>
        <dbReference type="EC" id="2.1.1.192"/>
    </reaction>
</comment>
<comment type="catalytic activity">
    <reaction evidence="1">
        <text>adenosine(37) in tRNA + 2 reduced [2Fe-2S]-[ferredoxin] + 2 S-adenosyl-L-methionine = 2-methyladenosine(37) in tRNA + 5'-deoxyadenosine + L-methionine + 2 oxidized [2Fe-2S]-[ferredoxin] + S-adenosyl-L-homocysteine</text>
        <dbReference type="Rhea" id="RHEA:43332"/>
        <dbReference type="Rhea" id="RHEA-COMP:10000"/>
        <dbReference type="Rhea" id="RHEA-COMP:10001"/>
        <dbReference type="Rhea" id="RHEA-COMP:10162"/>
        <dbReference type="Rhea" id="RHEA-COMP:10485"/>
        <dbReference type="ChEBI" id="CHEBI:17319"/>
        <dbReference type="ChEBI" id="CHEBI:33737"/>
        <dbReference type="ChEBI" id="CHEBI:33738"/>
        <dbReference type="ChEBI" id="CHEBI:57844"/>
        <dbReference type="ChEBI" id="CHEBI:57856"/>
        <dbReference type="ChEBI" id="CHEBI:59789"/>
        <dbReference type="ChEBI" id="CHEBI:74411"/>
        <dbReference type="ChEBI" id="CHEBI:74497"/>
        <dbReference type="EC" id="2.1.1.192"/>
    </reaction>
</comment>
<comment type="cofactor">
    <cofactor evidence="1">
        <name>[4Fe-4S] cluster</name>
        <dbReference type="ChEBI" id="CHEBI:49883"/>
    </cofactor>
    <text evidence="1">Binds 1 [4Fe-4S] cluster. The cluster is coordinated with 3 cysteines and an exchangeable S-adenosyl-L-methionine.</text>
</comment>
<comment type="subcellular location">
    <subcellularLocation>
        <location evidence="1">Cytoplasm</location>
    </subcellularLocation>
</comment>
<comment type="miscellaneous">
    <text evidence="1">Reaction proceeds by a ping-pong mechanism involving intermediate methylation of a conserved cysteine residue.</text>
</comment>
<comment type="similarity">
    <text evidence="1">Belongs to the radical SAM superfamily. RlmN family.</text>
</comment>
<organism>
    <name type="scientific">Streptococcus equi subsp. zooepidemicus (strain H70)</name>
    <dbReference type="NCBI Taxonomy" id="553483"/>
    <lineage>
        <taxon>Bacteria</taxon>
        <taxon>Bacillati</taxon>
        <taxon>Bacillota</taxon>
        <taxon>Bacilli</taxon>
        <taxon>Lactobacillales</taxon>
        <taxon>Streptococcaceae</taxon>
        <taxon>Streptococcus</taxon>
    </lineage>
</organism>
<gene>
    <name evidence="1" type="primary">rlmN</name>
    <name type="ordered locus">SZO_14120</name>
</gene>
<proteinExistence type="inferred from homology"/>
<dbReference type="EC" id="2.1.1.192" evidence="1"/>
<dbReference type="EMBL" id="FM204884">
    <property type="protein sequence ID" value="CAX00012.1"/>
    <property type="molecule type" value="Genomic_DNA"/>
</dbReference>
<dbReference type="SMR" id="C0MD67"/>
<dbReference type="KEGG" id="seq:SZO_14120"/>
<dbReference type="eggNOG" id="COG0820">
    <property type="taxonomic scope" value="Bacteria"/>
</dbReference>
<dbReference type="HOGENOM" id="CLU_029101_0_1_9"/>
<dbReference type="Proteomes" id="UP000001368">
    <property type="component" value="Chromosome"/>
</dbReference>
<dbReference type="GO" id="GO:0005737">
    <property type="term" value="C:cytoplasm"/>
    <property type="evidence" value="ECO:0007669"/>
    <property type="project" value="UniProtKB-SubCell"/>
</dbReference>
<dbReference type="GO" id="GO:0051539">
    <property type="term" value="F:4 iron, 4 sulfur cluster binding"/>
    <property type="evidence" value="ECO:0007669"/>
    <property type="project" value="UniProtKB-UniRule"/>
</dbReference>
<dbReference type="GO" id="GO:0046872">
    <property type="term" value="F:metal ion binding"/>
    <property type="evidence" value="ECO:0007669"/>
    <property type="project" value="UniProtKB-KW"/>
</dbReference>
<dbReference type="GO" id="GO:0070040">
    <property type="term" value="F:rRNA (adenine(2503)-C2-)-methyltransferase activity"/>
    <property type="evidence" value="ECO:0007669"/>
    <property type="project" value="UniProtKB-UniRule"/>
</dbReference>
<dbReference type="GO" id="GO:0019843">
    <property type="term" value="F:rRNA binding"/>
    <property type="evidence" value="ECO:0007669"/>
    <property type="project" value="UniProtKB-UniRule"/>
</dbReference>
<dbReference type="GO" id="GO:0002935">
    <property type="term" value="F:tRNA (adenine(37)-C2)-methyltransferase activity"/>
    <property type="evidence" value="ECO:0007669"/>
    <property type="project" value="UniProtKB-UniRule"/>
</dbReference>
<dbReference type="GO" id="GO:0000049">
    <property type="term" value="F:tRNA binding"/>
    <property type="evidence" value="ECO:0007669"/>
    <property type="project" value="UniProtKB-UniRule"/>
</dbReference>
<dbReference type="GO" id="GO:0070475">
    <property type="term" value="P:rRNA base methylation"/>
    <property type="evidence" value="ECO:0007669"/>
    <property type="project" value="UniProtKB-UniRule"/>
</dbReference>
<dbReference type="GO" id="GO:0030488">
    <property type="term" value="P:tRNA methylation"/>
    <property type="evidence" value="ECO:0007669"/>
    <property type="project" value="UniProtKB-UniRule"/>
</dbReference>
<dbReference type="CDD" id="cd01335">
    <property type="entry name" value="Radical_SAM"/>
    <property type="match status" value="1"/>
</dbReference>
<dbReference type="FunFam" id="3.20.20.70:FF:000014">
    <property type="entry name" value="Probable dual-specificity RNA methyltransferase RlmN"/>
    <property type="match status" value="1"/>
</dbReference>
<dbReference type="Gene3D" id="1.10.150.530">
    <property type="match status" value="1"/>
</dbReference>
<dbReference type="Gene3D" id="3.20.20.70">
    <property type="entry name" value="Aldolase class I"/>
    <property type="match status" value="1"/>
</dbReference>
<dbReference type="HAMAP" id="MF_01849">
    <property type="entry name" value="RNA_methyltr_RlmN"/>
    <property type="match status" value="1"/>
</dbReference>
<dbReference type="InterPro" id="IPR013785">
    <property type="entry name" value="Aldolase_TIM"/>
</dbReference>
<dbReference type="InterPro" id="IPR040072">
    <property type="entry name" value="Methyltransferase_A"/>
</dbReference>
<dbReference type="InterPro" id="IPR048641">
    <property type="entry name" value="RlmN_N"/>
</dbReference>
<dbReference type="InterPro" id="IPR027492">
    <property type="entry name" value="RNA_MTrfase_RlmN"/>
</dbReference>
<dbReference type="InterPro" id="IPR004383">
    <property type="entry name" value="rRNA_lsu_MTrfase_RlmN/Cfr"/>
</dbReference>
<dbReference type="InterPro" id="IPR007197">
    <property type="entry name" value="rSAM"/>
</dbReference>
<dbReference type="NCBIfam" id="TIGR00048">
    <property type="entry name" value="rRNA_mod_RlmN"/>
    <property type="match status" value="1"/>
</dbReference>
<dbReference type="PANTHER" id="PTHR30544">
    <property type="entry name" value="23S RRNA METHYLTRANSFERASE"/>
    <property type="match status" value="1"/>
</dbReference>
<dbReference type="PANTHER" id="PTHR30544:SF5">
    <property type="entry name" value="RADICAL SAM CORE DOMAIN-CONTAINING PROTEIN"/>
    <property type="match status" value="1"/>
</dbReference>
<dbReference type="Pfam" id="PF04055">
    <property type="entry name" value="Radical_SAM"/>
    <property type="match status" value="1"/>
</dbReference>
<dbReference type="Pfam" id="PF21016">
    <property type="entry name" value="RlmN_N"/>
    <property type="match status" value="1"/>
</dbReference>
<dbReference type="PIRSF" id="PIRSF006004">
    <property type="entry name" value="CHP00048"/>
    <property type="match status" value="1"/>
</dbReference>
<dbReference type="SFLD" id="SFLDF00275">
    <property type="entry name" value="adenosine_C2_methyltransferase"/>
    <property type="match status" value="1"/>
</dbReference>
<dbReference type="SFLD" id="SFLDG01062">
    <property type="entry name" value="methyltransferase_(Class_A)"/>
    <property type="match status" value="1"/>
</dbReference>
<dbReference type="SUPFAM" id="SSF102114">
    <property type="entry name" value="Radical SAM enzymes"/>
    <property type="match status" value="1"/>
</dbReference>
<dbReference type="PROSITE" id="PS51918">
    <property type="entry name" value="RADICAL_SAM"/>
    <property type="match status" value="1"/>
</dbReference>
<reference key="1">
    <citation type="journal article" date="2009" name="PLoS Pathog.">
        <title>Genomic evidence for the evolution of Streptococcus equi: host restriction, increased virulence, and genetic exchange with human pathogens.</title>
        <authorList>
            <person name="Holden M.T.G."/>
            <person name="Heather Z."/>
            <person name="Paillot R."/>
            <person name="Steward K.F."/>
            <person name="Webb K."/>
            <person name="Ainslie F."/>
            <person name="Jourdan T."/>
            <person name="Bason N.C."/>
            <person name="Holroyd N.E."/>
            <person name="Mungall K."/>
            <person name="Quail M.A."/>
            <person name="Sanders M."/>
            <person name="Simmonds M."/>
            <person name="Willey D."/>
            <person name="Brooks K."/>
            <person name="Aanensen D.M."/>
            <person name="Spratt B.G."/>
            <person name="Jolley K.A."/>
            <person name="Maiden M.C.J."/>
            <person name="Kehoe M."/>
            <person name="Chanter N."/>
            <person name="Bentley S.D."/>
            <person name="Robinson C."/>
            <person name="Maskell D.J."/>
            <person name="Parkhill J."/>
            <person name="Waller A.S."/>
        </authorList>
    </citation>
    <scope>NUCLEOTIDE SEQUENCE [LARGE SCALE GENOMIC DNA]</scope>
    <source>
        <strain>H70</strain>
    </source>
</reference>
<evidence type="ECO:0000255" key="1">
    <source>
        <dbReference type="HAMAP-Rule" id="MF_01849"/>
    </source>
</evidence>
<evidence type="ECO:0000255" key="2">
    <source>
        <dbReference type="PROSITE-ProRule" id="PRU01266"/>
    </source>
</evidence>
<name>RLMN_STRS7</name>
<keyword id="KW-0004">4Fe-4S</keyword>
<keyword id="KW-0963">Cytoplasm</keyword>
<keyword id="KW-1015">Disulfide bond</keyword>
<keyword id="KW-0408">Iron</keyword>
<keyword id="KW-0411">Iron-sulfur</keyword>
<keyword id="KW-0479">Metal-binding</keyword>
<keyword id="KW-0489">Methyltransferase</keyword>
<keyword id="KW-0698">rRNA processing</keyword>
<keyword id="KW-0949">S-adenosyl-L-methionine</keyword>
<keyword id="KW-0808">Transferase</keyword>
<keyword id="KW-0819">tRNA processing</keyword>
<protein>
    <recommendedName>
        <fullName evidence="1">Probable dual-specificity RNA methyltransferase RlmN</fullName>
        <ecNumber evidence="1">2.1.1.192</ecNumber>
    </recommendedName>
    <alternativeName>
        <fullName evidence="1">23S rRNA (adenine(2503)-C(2))-methyltransferase</fullName>
    </alternativeName>
    <alternativeName>
        <fullName evidence="1">23S rRNA m2A2503 methyltransferase</fullName>
    </alternativeName>
    <alternativeName>
        <fullName evidence="1">Ribosomal RNA large subunit methyltransferase N</fullName>
    </alternativeName>
    <alternativeName>
        <fullName evidence="1">tRNA (adenine(37)-C(2))-methyltransferase</fullName>
    </alternativeName>
    <alternativeName>
        <fullName evidence="1">tRNA m2A37 methyltransferase</fullName>
    </alternativeName>
</protein>